<comment type="function">
    <text evidence="3">Component of the NF-Y/HAP transcription factor complex (By similarity). The NF-Y complex stimulates the transcription of various genes by recognizing and binding to a CCAAT motif in promoters (By similarity).</text>
</comment>
<comment type="subunit">
    <text evidence="6 7">Heterotrimeric transcription factor composed of three components, NF-YA, NF-YB and NF-YC (PubMed:33098724). NF-YB and NF-YC must interact and dimerize for NF-YA association and DNA binding (PubMed:33098724). Binds directly with DPB3-1 (PubMed:25490919).</text>
</comment>
<comment type="interaction">
    <interactant intactId="EBI-15192505">
        <id>Q9FGJ3</id>
    </interactant>
    <interactant intactId="EBI-15193063">
        <id>Q8VYU9</id>
        <label>At2g46735</label>
    </interactant>
    <organismsDiffer>false</organismsDiffer>
    <experiments>3</experiments>
</comment>
<comment type="interaction">
    <interactant intactId="EBI-15192505">
        <id>Q9FGJ3</id>
    </interactant>
    <interactant intactId="EBI-4461992">
        <id>Q9LN09</id>
        <label>DPB3-1</label>
    </interactant>
    <organismsDiffer>false</organismsDiffer>
    <experiments>4</experiments>
</comment>
<comment type="interaction">
    <interactant intactId="EBI-15192505">
        <id>Q9FGJ3</id>
    </interactant>
    <interactant intactId="EBI-15191737">
        <id>Q58CM8</id>
        <label>NFYC10</label>
    </interactant>
    <organismsDiffer>false</organismsDiffer>
    <experiments>3</experiments>
</comment>
<comment type="interaction">
    <interactant intactId="EBI-15192505">
        <id>Q9FGJ3</id>
    </interactant>
    <interactant intactId="EBI-2466133">
        <id>Q9FGP8</id>
        <label>NFYC7</label>
    </interactant>
    <organismsDiffer>false</organismsDiffer>
    <experiments>3</experiments>
</comment>
<comment type="interaction">
    <interactant intactId="EBI-15192505">
        <id>Q9FGJ3</id>
    </interactant>
    <interactant intactId="EBI-15191571">
        <id>Q4PSE2</id>
        <label>NFYC8</label>
    </interactant>
    <organismsDiffer>false</organismsDiffer>
    <experiments>5</experiments>
</comment>
<comment type="interaction">
    <interactant intactId="EBI-15192505">
        <id>Q9FGJ3</id>
    </interactant>
    <interactant intactId="EBI-2466050">
        <id>Q8L4B2</id>
        <label>NFYC9</label>
    </interactant>
    <organismsDiffer>false</organismsDiffer>
    <experiments>5</experiments>
</comment>
<comment type="subcellular location">
    <subcellularLocation>
        <location evidence="12">Nucleus</location>
    </subcellularLocation>
</comment>
<comment type="tissue specificity">
    <text evidence="5 8">Ubiquitous. Predominantly expressed in flowers and siliques.</text>
</comment>
<comment type="induction">
    <text evidence="6">Enhanced by dehydration stress.</text>
</comment>
<comment type="similarity">
    <text evidence="12">Belongs to the NFYB/HAP3 subunit family.</text>
</comment>
<protein>
    <recommendedName>
        <fullName evidence="9">Nuclear transcription factor Y subunit B-2</fullName>
        <shortName evidence="9">AtNF-YB-2</shortName>
        <shortName evidence="10">AtNF-YB2</shortName>
    </recommendedName>
    <alternativeName>
        <fullName evidence="11">Transcriptional activator HAP3B</fullName>
    </alternativeName>
</protein>
<sequence length="190" mass="20529">MGDSDRDSGGGQNGNNQNGQSSLSPREQDRFLPIANVSRIMKKALPANAKISKDAKETMQECVSEFISFVTGEASDKCQKEKRKTINGDDLLWAMTTLGFEDYVEPLKVYLQRFREIEGERTGLGRPQTGGEVGEHQRDAVGDGGGFYGGGGGMQYHQHHQFLHQQNHMYGATGGGSDSGGGAASGRTRT</sequence>
<organism>
    <name type="scientific">Arabidopsis thaliana</name>
    <name type="common">Mouse-ear cress</name>
    <dbReference type="NCBI Taxonomy" id="3702"/>
    <lineage>
        <taxon>Eukaryota</taxon>
        <taxon>Viridiplantae</taxon>
        <taxon>Streptophyta</taxon>
        <taxon>Embryophyta</taxon>
        <taxon>Tracheophyta</taxon>
        <taxon>Spermatophyta</taxon>
        <taxon>Magnoliopsida</taxon>
        <taxon>eudicotyledons</taxon>
        <taxon>Gunneridae</taxon>
        <taxon>Pentapetalae</taxon>
        <taxon>rosids</taxon>
        <taxon>malvids</taxon>
        <taxon>Brassicales</taxon>
        <taxon>Brassicaceae</taxon>
        <taxon>Camelineae</taxon>
        <taxon>Arabidopsis</taxon>
    </lineage>
</organism>
<proteinExistence type="evidence at protein level"/>
<keyword id="KW-0002">3D-structure</keyword>
<keyword id="KW-0010">Activator</keyword>
<keyword id="KW-0238">DNA-binding</keyword>
<keyword id="KW-0539">Nucleus</keyword>
<keyword id="KW-1185">Reference proteome</keyword>
<keyword id="KW-0804">Transcription</keyword>
<keyword id="KW-0805">Transcription regulation</keyword>
<accession>Q9FGJ3</accession>
<accession>O23634</accession>
<accession>Q9FV58</accession>
<name>NFYB2_ARATH</name>
<evidence type="ECO:0000250" key="1"/>
<evidence type="ECO:0000250" key="2">
    <source>
        <dbReference type="UniProtKB" id="P13434"/>
    </source>
</evidence>
<evidence type="ECO:0000250" key="3">
    <source>
        <dbReference type="UniProtKB" id="Q84W66"/>
    </source>
</evidence>
<evidence type="ECO:0000256" key="4">
    <source>
        <dbReference type="SAM" id="MobiDB-lite"/>
    </source>
</evidence>
<evidence type="ECO:0000269" key="5">
    <source>
    </source>
</evidence>
<evidence type="ECO:0000269" key="6">
    <source>
    </source>
</evidence>
<evidence type="ECO:0000269" key="7">
    <source>
    </source>
</evidence>
<evidence type="ECO:0000269" key="8">
    <source>
    </source>
</evidence>
<evidence type="ECO:0000303" key="9">
    <source>
    </source>
</evidence>
<evidence type="ECO:0000303" key="10">
    <source>
    </source>
</evidence>
<evidence type="ECO:0000303" key="11">
    <source>
    </source>
</evidence>
<evidence type="ECO:0000305" key="12"/>
<evidence type="ECO:0000312" key="13">
    <source>
        <dbReference type="Araport" id="AT5G47640"/>
    </source>
</evidence>
<evidence type="ECO:0000312" key="14">
    <source>
        <dbReference type="EMBL" id="BAB09090.1"/>
    </source>
</evidence>
<evidence type="ECO:0007829" key="15">
    <source>
        <dbReference type="PDB" id="6R0M"/>
    </source>
</evidence>
<evidence type="ECO:0007829" key="16">
    <source>
        <dbReference type="PDB" id="6R0N"/>
    </source>
</evidence>
<feature type="chain" id="PRO_0000204616" description="Nuclear transcription factor Y subunit B-2">
    <location>
        <begin position="1"/>
        <end position="190"/>
    </location>
</feature>
<feature type="DNA-binding region" evidence="2">
    <location>
        <begin position="32"/>
        <end position="38"/>
    </location>
</feature>
<feature type="region of interest" description="Disordered" evidence="4">
    <location>
        <begin position="1"/>
        <end position="30"/>
    </location>
</feature>
<feature type="region of interest" description="Subunit association domain (SAD)" evidence="1">
    <location>
        <begin position="59"/>
        <end position="70"/>
    </location>
</feature>
<feature type="region of interest" description="Disordered" evidence="4">
    <location>
        <begin position="168"/>
        <end position="190"/>
    </location>
</feature>
<feature type="compositionally biased region" description="Gly residues" evidence="4">
    <location>
        <begin position="172"/>
        <end position="184"/>
    </location>
</feature>
<feature type="helix" evidence="15">
    <location>
        <begin position="25"/>
        <end position="28"/>
    </location>
</feature>
<feature type="helix" evidence="16">
    <location>
        <begin position="34"/>
        <end position="44"/>
    </location>
</feature>
<feature type="helix" evidence="16">
    <location>
        <begin position="53"/>
        <end position="80"/>
    </location>
</feature>
<feature type="helix" evidence="16">
    <location>
        <begin position="88"/>
        <end position="97"/>
    </location>
</feature>
<feature type="helix" evidence="16">
    <location>
        <begin position="101"/>
        <end position="115"/>
    </location>
</feature>
<reference key="1">
    <citation type="submission" date="1999-04" db="EMBL/GenBank/DDBJ databases">
        <title>Structural analysis of Arabidopsis thaliana chromosome 5. XI.</title>
        <authorList>
            <person name="Kaneko T."/>
            <person name="Katoh T."/>
            <person name="Asamizu E."/>
            <person name="Sato S."/>
            <person name="Nakamura Y."/>
            <person name="Kotani H."/>
            <person name="Tabata S."/>
        </authorList>
    </citation>
    <scope>NUCLEOTIDE SEQUENCE [LARGE SCALE GENOMIC DNA]</scope>
    <source>
        <strain>cv. Columbia</strain>
    </source>
</reference>
<reference key="2">
    <citation type="journal article" date="2017" name="Plant J.">
        <title>Araport11: a complete reannotation of the Arabidopsis thaliana reference genome.</title>
        <authorList>
            <person name="Cheng C.Y."/>
            <person name="Krishnakumar V."/>
            <person name="Chan A.P."/>
            <person name="Thibaud-Nissen F."/>
            <person name="Schobel S."/>
            <person name="Town C.D."/>
        </authorList>
    </citation>
    <scope>GENOME REANNOTATION</scope>
    <source>
        <strain>cv. Columbia</strain>
    </source>
</reference>
<reference key="3">
    <citation type="journal article" date="2003" name="Science">
        <title>Empirical analysis of transcriptional activity in the Arabidopsis genome.</title>
        <authorList>
            <person name="Yamada K."/>
            <person name="Lim J."/>
            <person name="Dale J.M."/>
            <person name="Chen H."/>
            <person name="Shinn P."/>
            <person name="Palm C.J."/>
            <person name="Southwick A.M."/>
            <person name="Wu H.C."/>
            <person name="Kim C.J."/>
            <person name="Nguyen M."/>
            <person name="Pham P.K."/>
            <person name="Cheuk R.F."/>
            <person name="Karlin-Newmann G."/>
            <person name="Liu S.X."/>
            <person name="Lam B."/>
            <person name="Sakano H."/>
            <person name="Wu T."/>
            <person name="Yu G."/>
            <person name="Miranda M."/>
            <person name="Quach H.L."/>
            <person name="Tripp M."/>
            <person name="Chang C.H."/>
            <person name="Lee J.M."/>
            <person name="Toriumi M.J."/>
            <person name="Chan M.M."/>
            <person name="Tang C.C."/>
            <person name="Onodera C.S."/>
            <person name="Deng J.M."/>
            <person name="Akiyama K."/>
            <person name="Ansari Y."/>
            <person name="Arakawa T."/>
            <person name="Banh J."/>
            <person name="Banno F."/>
            <person name="Bowser L."/>
            <person name="Brooks S.Y."/>
            <person name="Carninci P."/>
            <person name="Chao Q."/>
            <person name="Choy N."/>
            <person name="Enju A."/>
            <person name="Goldsmith A.D."/>
            <person name="Gurjal M."/>
            <person name="Hansen N.F."/>
            <person name="Hayashizaki Y."/>
            <person name="Johnson-Hopson C."/>
            <person name="Hsuan V.W."/>
            <person name="Iida K."/>
            <person name="Karnes M."/>
            <person name="Khan S."/>
            <person name="Koesema E."/>
            <person name="Ishida J."/>
            <person name="Jiang P.X."/>
            <person name="Jones T."/>
            <person name="Kawai J."/>
            <person name="Kamiya A."/>
            <person name="Meyers C."/>
            <person name="Nakajima M."/>
            <person name="Narusaka M."/>
            <person name="Seki M."/>
            <person name="Sakurai T."/>
            <person name="Satou M."/>
            <person name="Tamse R."/>
            <person name="Vaysberg M."/>
            <person name="Wallender E.K."/>
            <person name="Wong C."/>
            <person name="Yamamura Y."/>
            <person name="Yuan S."/>
            <person name="Shinozaki K."/>
            <person name="Davis R.W."/>
            <person name="Theologis A."/>
            <person name="Ecker J.R."/>
        </authorList>
    </citation>
    <scope>NUCLEOTIDE SEQUENCE [LARGE SCALE MRNA]</scope>
    <source>
        <strain>cv. Columbia</strain>
    </source>
</reference>
<reference key="4">
    <citation type="journal article" date="1998" name="Plant Physiol.">
        <title>Multiple genes encoding the conserved CCAAT-box transcription factor complex are expressed in Arabidopsis.</title>
        <authorList>
            <person name="Edwards D."/>
            <person name="Murray J.A.H."/>
            <person name="Smith A.G."/>
        </authorList>
    </citation>
    <scope>NUCLEOTIDE SEQUENCE [MRNA] OF 5-190</scope>
    <scope>TISSUE SPECIFICITY</scope>
</reference>
<reference key="5">
    <citation type="journal article" date="2000" name="Plant J.">
        <title>Functional identification of an Arabidopsis Snf4 ortholog by screening for heterologous multicopy suppressors of snf4 deficiency in yeast.</title>
        <authorList>
            <person name="Kleinow T."/>
            <person name="Bhalerao R."/>
            <person name="Breuer F."/>
            <person name="Umeda M."/>
            <person name="Salchert K."/>
            <person name="Koncz C."/>
        </authorList>
    </citation>
    <scope>NUCLEOTIDE SEQUENCE [MRNA] OF 68-190</scope>
    <source>
        <strain>cv. Columbia</strain>
    </source>
</reference>
<reference key="6">
    <citation type="journal article" date="2001" name="Gene">
        <title>Regulation of the CCAAT-binding NF-Y subunits in Arabidopsis thaliana.</title>
        <authorList>
            <person name="Gusmaroli G."/>
            <person name="Tonelli C."/>
            <person name="Mantovani R."/>
        </authorList>
    </citation>
    <scope>TISSUE SPECIFICITY</scope>
</reference>
<reference key="7">
    <citation type="journal article" date="2002" name="Gene">
        <title>Regulation of novel members of the Arabidopsis thaliana CCAAT-binding nuclear factor Y subunits.</title>
        <authorList>
            <person name="Gusmaroli G."/>
            <person name="Tonelli C."/>
            <person name="Mantovani R."/>
        </authorList>
    </citation>
    <scope>GENE FAMILY</scope>
    <scope>NOMENCLATURE</scope>
</reference>
<reference key="8">
    <citation type="journal article" date="2014" name="Plant Cell">
        <title>Arabidopsis DPB3-1, a DREB2A interactor, specifically enhances heat stress-induced gene expression by forming a heat stress-specific transcriptional complex with NF-Y subunits.</title>
        <authorList>
            <person name="Sato H."/>
            <person name="Mizoi J."/>
            <person name="Tanaka H."/>
            <person name="Maruyama K."/>
            <person name="Qin F."/>
            <person name="Osakabe Y."/>
            <person name="Morimoto K."/>
            <person name="Ohori T."/>
            <person name="Kusakabe K."/>
            <person name="Nagata M."/>
            <person name="Shinozaki K."/>
            <person name="Yamaguchi-Shinozaki K."/>
        </authorList>
    </citation>
    <scope>INTERACTION WITH DPB3-1</scope>
    <scope>INDUCTION BY DEHYDRATION</scope>
    <source>
        <strain>cv. Columbia</strain>
    </source>
</reference>
<reference key="9">
    <citation type="journal article" date="2016" name="Front. Plant Sci.">
        <title>The Arabidopsis thaliana Nuclear Factor Y Transcription Factors.</title>
        <authorList>
            <person name="Zhao H."/>
            <person name="Wu D."/>
            <person name="Kong F."/>
            <person name="Lin K."/>
            <person name="Zhang H."/>
            <person name="Li G."/>
        </authorList>
    </citation>
    <scope>REVIEW</scope>
</reference>
<reference key="10">
    <citation type="journal article" date="2021" name="Plant J.">
        <title>Structural determinants for NF-Y subunit organization and NF-Y/DNA association in plants.</title>
        <authorList>
            <person name="Chaves-Sanjuan A."/>
            <person name="Gnesutta N."/>
            <person name="Gobbini A."/>
            <person name="Martignago D."/>
            <person name="Bernardini A."/>
            <person name="Fornara F."/>
            <person name="Mantovani R."/>
            <person name="Nardini M."/>
        </authorList>
    </citation>
    <scope>X-RAY CRYSTALLOGRAPHY (2.10 ANGSTROMS) OF 24-116</scope>
    <scope>SUBUNIT</scope>
</reference>
<gene>
    <name evidence="9" type="primary">NFYB2</name>
    <name evidence="11" type="synonym">HAP3B</name>
    <name evidence="13" type="ordered locus">At5g47640</name>
    <name evidence="14" type="ORF">MNJ7.23</name>
</gene>
<dbReference type="EMBL" id="AB025628">
    <property type="protein sequence ID" value="BAB09090.1"/>
    <property type="molecule type" value="Genomic_DNA"/>
</dbReference>
<dbReference type="EMBL" id="CP002688">
    <property type="protein sequence ID" value="AED95545.1"/>
    <property type="molecule type" value="Genomic_DNA"/>
</dbReference>
<dbReference type="EMBL" id="AF385744">
    <property type="protein sequence ID" value="AAK60334.1"/>
    <property type="molecule type" value="mRNA"/>
</dbReference>
<dbReference type="EMBL" id="AY078026">
    <property type="protein sequence ID" value="AAL77727.1"/>
    <property type="molecule type" value="mRNA"/>
</dbReference>
<dbReference type="EMBL" id="Y13724">
    <property type="protein sequence ID" value="CAA74052.1"/>
    <property type="molecule type" value="mRNA"/>
</dbReference>
<dbReference type="EMBL" id="AF250338">
    <property type="protein sequence ID" value="AAG10144.1"/>
    <property type="molecule type" value="mRNA"/>
</dbReference>
<dbReference type="RefSeq" id="NP_199575.1">
    <property type="nucleotide sequence ID" value="NM_124138.2"/>
</dbReference>
<dbReference type="PDB" id="6R0M">
    <property type="method" value="X-ray"/>
    <property type="resolution" value="2.30 A"/>
    <property type="chains" value="A/C=24-116"/>
</dbReference>
<dbReference type="PDB" id="6R0N">
    <property type="method" value="X-ray"/>
    <property type="resolution" value="2.10 A"/>
    <property type="chains" value="A=24-116"/>
</dbReference>
<dbReference type="PDB" id="6R2V">
    <property type="method" value="X-ray"/>
    <property type="resolution" value="2.50 A"/>
    <property type="chains" value="B=24-116"/>
</dbReference>
<dbReference type="PDB" id="7CVQ">
    <property type="method" value="X-ray"/>
    <property type="resolution" value="3.30 A"/>
    <property type="chains" value="B/G/L/Q=24-120"/>
</dbReference>
<dbReference type="PDBsum" id="6R0M"/>
<dbReference type="PDBsum" id="6R0N"/>
<dbReference type="PDBsum" id="6R2V"/>
<dbReference type="PDBsum" id="7CVQ"/>
<dbReference type="SMR" id="Q9FGJ3"/>
<dbReference type="BioGRID" id="20063">
    <property type="interactions" value="31"/>
</dbReference>
<dbReference type="FunCoup" id="Q9FGJ3">
    <property type="interactions" value="2528"/>
</dbReference>
<dbReference type="IntAct" id="Q9FGJ3">
    <property type="interactions" value="14"/>
</dbReference>
<dbReference type="STRING" id="3702.Q9FGJ3"/>
<dbReference type="iPTMnet" id="Q9FGJ3"/>
<dbReference type="PaxDb" id="3702-AT5G47640.1"/>
<dbReference type="ProteomicsDB" id="251296"/>
<dbReference type="EnsemblPlants" id="AT5G47640.1">
    <property type="protein sequence ID" value="AT5G47640.1"/>
    <property type="gene ID" value="AT5G47640"/>
</dbReference>
<dbReference type="GeneID" id="834815"/>
<dbReference type="Gramene" id="AT5G47640.1">
    <property type="protein sequence ID" value="AT5G47640.1"/>
    <property type="gene ID" value="AT5G47640"/>
</dbReference>
<dbReference type="KEGG" id="ath:AT5G47640"/>
<dbReference type="Araport" id="AT5G47640"/>
<dbReference type="TAIR" id="AT5G47640">
    <property type="gene designation" value="NF-YB2"/>
</dbReference>
<dbReference type="eggNOG" id="KOG0869">
    <property type="taxonomic scope" value="Eukaryota"/>
</dbReference>
<dbReference type="HOGENOM" id="CLU_066247_1_1_1"/>
<dbReference type="InParanoid" id="Q9FGJ3"/>
<dbReference type="OMA" id="HMYGATG"/>
<dbReference type="OrthoDB" id="386949at2759"/>
<dbReference type="PhylomeDB" id="Q9FGJ3"/>
<dbReference type="PRO" id="PR:Q9FGJ3"/>
<dbReference type="Proteomes" id="UP000006548">
    <property type="component" value="Chromosome 5"/>
</dbReference>
<dbReference type="ExpressionAtlas" id="Q9FGJ3">
    <property type="expression patterns" value="baseline and differential"/>
</dbReference>
<dbReference type="GO" id="GO:0016602">
    <property type="term" value="C:CCAAT-binding factor complex"/>
    <property type="evidence" value="ECO:0007669"/>
    <property type="project" value="InterPro"/>
</dbReference>
<dbReference type="GO" id="GO:0009536">
    <property type="term" value="C:plastid"/>
    <property type="evidence" value="ECO:0007005"/>
    <property type="project" value="TAIR"/>
</dbReference>
<dbReference type="GO" id="GO:0001228">
    <property type="term" value="F:DNA-binding transcription activator activity, RNA polymerase II-specific"/>
    <property type="evidence" value="ECO:0007669"/>
    <property type="project" value="InterPro"/>
</dbReference>
<dbReference type="GO" id="GO:0003700">
    <property type="term" value="F:DNA-binding transcription factor activity"/>
    <property type="evidence" value="ECO:0000250"/>
    <property type="project" value="TAIR"/>
</dbReference>
<dbReference type="GO" id="GO:0046982">
    <property type="term" value="F:protein heterodimerization activity"/>
    <property type="evidence" value="ECO:0007669"/>
    <property type="project" value="InterPro"/>
</dbReference>
<dbReference type="GO" id="GO:0000976">
    <property type="term" value="F:transcription cis-regulatory region binding"/>
    <property type="evidence" value="ECO:0000353"/>
    <property type="project" value="TAIR"/>
</dbReference>
<dbReference type="GO" id="GO:0003712">
    <property type="term" value="F:transcription coregulator activity"/>
    <property type="evidence" value="ECO:0000314"/>
    <property type="project" value="TAIR"/>
</dbReference>
<dbReference type="GO" id="GO:0048574">
    <property type="term" value="P:long-day photoperiodism, flowering"/>
    <property type="evidence" value="ECO:0000315"/>
    <property type="project" value="TAIR"/>
</dbReference>
<dbReference type="GO" id="GO:0009414">
    <property type="term" value="P:response to water deprivation"/>
    <property type="evidence" value="ECO:0000270"/>
    <property type="project" value="UniProtKB"/>
</dbReference>
<dbReference type="CDD" id="cd22907">
    <property type="entry name" value="HFD_NFYB"/>
    <property type="match status" value="1"/>
</dbReference>
<dbReference type="FunFam" id="1.10.20.10:FF:000035">
    <property type="entry name" value="Nuclear transcription factor Y subunit B-3"/>
    <property type="match status" value="1"/>
</dbReference>
<dbReference type="Gene3D" id="1.10.20.10">
    <property type="entry name" value="Histone, subunit A"/>
    <property type="match status" value="1"/>
</dbReference>
<dbReference type="InterPro" id="IPR003958">
    <property type="entry name" value="CBFA_NFYB_domain"/>
</dbReference>
<dbReference type="InterPro" id="IPR009072">
    <property type="entry name" value="Histone-fold"/>
</dbReference>
<dbReference type="InterPro" id="IPR027113">
    <property type="entry name" value="Transc_fact_NFYB/HAP3"/>
</dbReference>
<dbReference type="InterPro" id="IPR003956">
    <property type="entry name" value="Transcrpt_fac_NFYB/HAP3_CS"/>
</dbReference>
<dbReference type="PANTHER" id="PTHR11064">
    <property type="entry name" value="CCAAT-BINDING TRANSCRIPTION FACTOR-RELATED"/>
    <property type="match status" value="1"/>
</dbReference>
<dbReference type="PANTHER" id="PTHR11064:SF189">
    <property type="entry name" value="NUCLEAR TRANSCRIPTION FACTOR Y SUBUNIT B-2"/>
    <property type="match status" value="1"/>
</dbReference>
<dbReference type="Pfam" id="PF00808">
    <property type="entry name" value="CBFD_NFYB_HMF"/>
    <property type="match status" value="1"/>
</dbReference>
<dbReference type="PRINTS" id="PR00615">
    <property type="entry name" value="CCAATSUBUNTA"/>
</dbReference>
<dbReference type="SUPFAM" id="SSF47113">
    <property type="entry name" value="Histone-fold"/>
    <property type="match status" value="1"/>
</dbReference>
<dbReference type="PROSITE" id="PS00685">
    <property type="entry name" value="NFYB_HAP3"/>
    <property type="match status" value="1"/>
</dbReference>